<gene>
    <name evidence="1" type="primary">rlmH</name>
    <name type="ordered locus">Mfla_0592</name>
</gene>
<protein>
    <recommendedName>
        <fullName evidence="1">Ribosomal RNA large subunit methyltransferase H</fullName>
        <ecNumber evidence="1">2.1.1.177</ecNumber>
    </recommendedName>
    <alternativeName>
        <fullName evidence="1">23S rRNA (pseudouridine1915-N3)-methyltransferase</fullName>
    </alternativeName>
    <alternativeName>
        <fullName evidence="1">23S rRNA m3Psi1915 methyltransferase</fullName>
    </alternativeName>
    <alternativeName>
        <fullName evidence="1">rRNA (pseudouridine-N3-)-methyltransferase RlmH</fullName>
    </alternativeName>
</protein>
<dbReference type="EC" id="2.1.1.177" evidence="1"/>
<dbReference type="EMBL" id="CP000284">
    <property type="protein sequence ID" value="ABE48862.1"/>
    <property type="molecule type" value="Genomic_DNA"/>
</dbReference>
<dbReference type="RefSeq" id="WP_011478959.1">
    <property type="nucleotide sequence ID" value="NC_007947.1"/>
</dbReference>
<dbReference type="SMR" id="Q1H3S5"/>
<dbReference type="STRING" id="265072.Mfla_0592"/>
<dbReference type="KEGG" id="mfa:Mfla_0592"/>
<dbReference type="eggNOG" id="COG1576">
    <property type="taxonomic scope" value="Bacteria"/>
</dbReference>
<dbReference type="HOGENOM" id="CLU_100552_1_0_4"/>
<dbReference type="OrthoDB" id="9806643at2"/>
<dbReference type="Proteomes" id="UP000002440">
    <property type="component" value="Chromosome"/>
</dbReference>
<dbReference type="GO" id="GO:0005737">
    <property type="term" value="C:cytoplasm"/>
    <property type="evidence" value="ECO:0007669"/>
    <property type="project" value="UniProtKB-SubCell"/>
</dbReference>
<dbReference type="GO" id="GO:0070038">
    <property type="term" value="F:rRNA (pseudouridine-N3-)-methyltransferase activity"/>
    <property type="evidence" value="ECO:0007669"/>
    <property type="project" value="UniProtKB-UniRule"/>
</dbReference>
<dbReference type="CDD" id="cd18081">
    <property type="entry name" value="RlmH-like"/>
    <property type="match status" value="1"/>
</dbReference>
<dbReference type="Gene3D" id="3.40.1280.10">
    <property type="match status" value="1"/>
</dbReference>
<dbReference type="HAMAP" id="MF_00658">
    <property type="entry name" value="23SrRNA_methyltr_H"/>
    <property type="match status" value="1"/>
</dbReference>
<dbReference type="InterPro" id="IPR029028">
    <property type="entry name" value="Alpha/beta_knot_MTases"/>
</dbReference>
<dbReference type="InterPro" id="IPR003742">
    <property type="entry name" value="RlmH-like"/>
</dbReference>
<dbReference type="InterPro" id="IPR029026">
    <property type="entry name" value="tRNA_m1G_MTases_N"/>
</dbReference>
<dbReference type="NCBIfam" id="NF000986">
    <property type="entry name" value="PRK00103.1-4"/>
    <property type="match status" value="1"/>
</dbReference>
<dbReference type="NCBIfam" id="TIGR00246">
    <property type="entry name" value="tRNA_RlmH_YbeA"/>
    <property type="match status" value="1"/>
</dbReference>
<dbReference type="PANTHER" id="PTHR33603">
    <property type="entry name" value="METHYLTRANSFERASE"/>
    <property type="match status" value="1"/>
</dbReference>
<dbReference type="PANTHER" id="PTHR33603:SF1">
    <property type="entry name" value="RIBOSOMAL RNA LARGE SUBUNIT METHYLTRANSFERASE H"/>
    <property type="match status" value="1"/>
</dbReference>
<dbReference type="Pfam" id="PF02590">
    <property type="entry name" value="SPOUT_MTase"/>
    <property type="match status" value="1"/>
</dbReference>
<dbReference type="PIRSF" id="PIRSF004505">
    <property type="entry name" value="MT_bac"/>
    <property type="match status" value="1"/>
</dbReference>
<dbReference type="SUPFAM" id="SSF75217">
    <property type="entry name" value="alpha/beta knot"/>
    <property type="match status" value="1"/>
</dbReference>
<organism>
    <name type="scientific">Methylobacillus flagellatus (strain ATCC 51484 / DSM 6875 / VKM B-1610 / KT)</name>
    <dbReference type="NCBI Taxonomy" id="265072"/>
    <lineage>
        <taxon>Bacteria</taxon>
        <taxon>Pseudomonadati</taxon>
        <taxon>Pseudomonadota</taxon>
        <taxon>Betaproteobacteria</taxon>
        <taxon>Nitrosomonadales</taxon>
        <taxon>Methylophilaceae</taxon>
        <taxon>Methylobacillus</taxon>
    </lineage>
</organism>
<reference key="1">
    <citation type="submission" date="2006-03" db="EMBL/GenBank/DDBJ databases">
        <title>Complete sequence of Methylobacillus flagellatus KT.</title>
        <authorList>
            <consortium name="US DOE Joint Genome Institute"/>
            <person name="Copeland A."/>
            <person name="Lucas S."/>
            <person name="Lapidus A."/>
            <person name="Barry K."/>
            <person name="Detter J.C."/>
            <person name="Glavina del Rio T."/>
            <person name="Hammon N."/>
            <person name="Israni S."/>
            <person name="Dalin E."/>
            <person name="Tice H."/>
            <person name="Pitluck S."/>
            <person name="Brettin T."/>
            <person name="Bruce D."/>
            <person name="Han C."/>
            <person name="Tapia R."/>
            <person name="Saunders E."/>
            <person name="Gilna P."/>
            <person name="Schmutz J."/>
            <person name="Larimer F."/>
            <person name="Land M."/>
            <person name="Kyrpides N."/>
            <person name="Anderson I."/>
            <person name="Richardson P."/>
        </authorList>
    </citation>
    <scope>NUCLEOTIDE SEQUENCE [LARGE SCALE GENOMIC DNA]</scope>
    <source>
        <strain>ATCC 51484 / DSM 6875 / VKM B-1610 / KT</strain>
    </source>
</reference>
<accession>Q1H3S5</accession>
<sequence>MKLRIISVGHKMPDWVQSACTEYTKRMPREMNVEIVEIKPDKRASGKNAEAVQEAEAKRILEAAGRDYLVALDEHGQEVTTLQLADKMRGWMESGRDVSLVIGGADGLHDSLKHKADWLWSLSKLTMPHGMVRVMLSEQLYRGLSVINNHPYHRE</sequence>
<keyword id="KW-0963">Cytoplasm</keyword>
<keyword id="KW-0489">Methyltransferase</keyword>
<keyword id="KW-1185">Reference proteome</keyword>
<keyword id="KW-0698">rRNA processing</keyword>
<keyword id="KW-0949">S-adenosyl-L-methionine</keyword>
<keyword id="KW-0808">Transferase</keyword>
<name>RLMH_METFK</name>
<comment type="function">
    <text evidence="1">Specifically methylates the pseudouridine at position 1915 (m3Psi1915) in 23S rRNA.</text>
</comment>
<comment type="catalytic activity">
    <reaction evidence="1">
        <text>pseudouridine(1915) in 23S rRNA + S-adenosyl-L-methionine = N(3)-methylpseudouridine(1915) in 23S rRNA + S-adenosyl-L-homocysteine + H(+)</text>
        <dbReference type="Rhea" id="RHEA:42752"/>
        <dbReference type="Rhea" id="RHEA-COMP:10221"/>
        <dbReference type="Rhea" id="RHEA-COMP:10222"/>
        <dbReference type="ChEBI" id="CHEBI:15378"/>
        <dbReference type="ChEBI" id="CHEBI:57856"/>
        <dbReference type="ChEBI" id="CHEBI:59789"/>
        <dbReference type="ChEBI" id="CHEBI:65314"/>
        <dbReference type="ChEBI" id="CHEBI:74486"/>
        <dbReference type="EC" id="2.1.1.177"/>
    </reaction>
</comment>
<comment type="subunit">
    <text evidence="1">Homodimer.</text>
</comment>
<comment type="subcellular location">
    <subcellularLocation>
        <location evidence="1">Cytoplasm</location>
    </subcellularLocation>
</comment>
<comment type="similarity">
    <text evidence="1">Belongs to the RNA methyltransferase RlmH family.</text>
</comment>
<proteinExistence type="inferred from homology"/>
<feature type="chain" id="PRO_0000260570" description="Ribosomal RNA large subunit methyltransferase H">
    <location>
        <begin position="1"/>
        <end position="155"/>
    </location>
</feature>
<feature type="binding site" evidence="1">
    <location>
        <position position="72"/>
    </location>
    <ligand>
        <name>S-adenosyl-L-methionine</name>
        <dbReference type="ChEBI" id="CHEBI:59789"/>
    </ligand>
</feature>
<feature type="binding site" evidence="1">
    <location>
        <position position="103"/>
    </location>
    <ligand>
        <name>S-adenosyl-L-methionine</name>
        <dbReference type="ChEBI" id="CHEBI:59789"/>
    </ligand>
</feature>
<feature type="binding site" evidence="1">
    <location>
        <begin position="122"/>
        <end position="127"/>
    </location>
    <ligand>
        <name>S-adenosyl-L-methionine</name>
        <dbReference type="ChEBI" id="CHEBI:59789"/>
    </ligand>
</feature>
<evidence type="ECO:0000255" key="1">
    <source>
        <dbReference type="HAMAP-Rule" id="MF_00658"/>
    </source>
</evidence>